<keyword id="KW-0002">3D-structure</keyword>
<keyword id="KW-0256">Endoplasmic reticulum</keyword>
<keyword id="KW-0472">Membrane</keyword>
<keyword id="KW-0653">Protein transport</keyword>
<keyword id="KW-1185">Reference proteome</keyword>
<keyword id="KW-0811">Translocation</keyword>
<keyword id="KW-0812">Transmembrane</keyword>
<keyword id="KW-1133">Transmembrane helix</keyword>
<keyword id="KW-0813">Transport</keyword>
<accession>P32915</accession>
<accession>D6VZ14</accession>
<gene>
    <name type="primary">SEC61</name>
    <name type="ordered locus">YLR378C</name>
    <name type="ORF">L3502.5</name>
</gene>
<reference key="1">
    <citation type="journal article" date="1992" name="Mol. Biol. Cell">
        <title>Protein translocation mutants defective in the insertion of integral membrane proteins into the endoplasmic reticulum.</title>
        <authorList>
            <person name="Stirling C.J."/>
            <person name="Rothblatt J."/>
            <person name="Hosobuchi M."/>
            <person name="Deshaies R."/>
            <person name="Schekman R."/>
        </authorList>
    </citation>
    <scope>NUCLEOTIDE SEQUENCE [GENOMIC DNA]</scope>
</reference>
<reference key="2">
    <citation type="journal article" date="1997" name="Nature">
        <title>The nucleotide sequence of Saccharomyces cerevisiae chromosome XII.</title>
        <authorList>
            <person name="Johnston M."/>
            <person name="Hillier L.W."/>
            <person name="Riles L."/>
            <person name="Albermann K."/>
            <person name="Andre B."/>
            <person name="Ansorge W."/>
            <person name="Benes V."/>
            <person name="Brueckner M."/>
            <person name="Delius H."/>
            <person name="Dubois E."/>
            <person name="Duesterhoeft A."/>
            <person name="Entian K.-D."/>
            <person name="Floeth M."/>
            <person name="Goffeau A."/>
            <person name="Hebling U."/>
            <person name="Heumann K."/>
            <person name="Heuss-Neitzel D."/>
            <person name="Hilbert H."/>
            <person name="Hilger F."/>
            <person name="Kleine K."/>
            <person name="Koetter P."/>
            <person name="Louis E.J."/>
            <person name="Messenguy F."/>
            <person name="Mewes H.-W."/>
            <person name="Miosga T."/>
            <person name="Moestl D."/>
            <person name="Mueller-Auer S."/>
            <person name="Nentwich U."/>
            <person name="Obermaier B."/>
            <person name="Piravandi E."/>
            <person name="Pohl T.M."/>
            <person name="Portetelle D."/>
            <person name="Purnelle B."/>
            <person name="Rechmann S."/>
            <person name="Rieger M."/>
            <person name="Rinke M."/>
            <person name="Rose M."/>
            <person name="Scharfe M."/>
            <person name="Scherens B."/>
            <person name="Scholler P."/>
            <person name="Schwager C."/>
            <person name="Schwarz S."/>
            <person name="Underwood A.P."/>
            <person name="Urrestarazu L.A."/>
            <person name="Vandenbol M."/>
            <person name="Verhasselt P."/>
            <person name="Vierendeels F."/>
            <person name="Voet M."/>
            <person name="Volckaert G."/>
            <person name="Voss H."/>
            <person name="Wambutt R."/>
            <person name="Wedler E."/>
            <person name="Wedler H."/>
            <person name="Zimmermann F.K."/>
            <person name="Zollner A."/>
            <person name="Hani J."/>
            <person name="Hoheisel J.D."/>
        </authorList>
    </citation>
    <scope>NUCLEOTIDE SEQUENCE [LARGE SCALE GENOMIC DNA]</scope>
    <source>
        <strain>ATCC 204508 / S288c</strain>
    </source>
</reference>
<reference key="3">
    <citation type="journal article" date="2014" name="G3 (Bethesda)">
        <title>The reference genome sequence of Saccharomyces cerevisiae: Then and now.</title>
        <authorList>
            <person name="Engel S.R."/>
            <person name="Dietrich F.S."/>
            <person name="Fisk D.G."/>
            <person name="Binkley G."/>
            <person name="Balakrishnan R."/>
            <person name="Costanzo M.C."/>
            <person name="Dwight S.S."/>
            <person name="Hitz B.C."/>
            <person name="Karra K."/>
            <person name="Nash R.S."/>
            <person name="Weng S."/>
            <person name="Wong E.D."/>
            <person name="Lloyd P."/>
            <person name="Skrzypek M.S."/>
            <person name="Miyasato S.R."/>
            <person name="Simison M."/>
            <person name="Cherry J.M."/>
        </authorList>
    </citation>
    <scope>GENOME REANNOTATION</scope>
    <source>
        <strain>ATCC 204508 / S288c</strain>
    </source>
</reference>
<reference key="4">
    <citation type="journal article" date="1996" name="J. Biol. Chem.">
        <title>Determination of the transmembrane topology of yeast Sec61p, an essential component of the endoplasmic reticulum translocation complex.</title>
        <authorList>
            <person name="Wilkinson B.M."/>
            <person name="Critchley A.J."/>
            <person name="Stirling J."/>
        </authorList>
    </citation>
    <scope>TOPOLOGY</scope>
</reference>
<reference key="5">
    <citation type="journal article" date="1996" name="Cell">
        <title>Oligomeric rings of the Sec61p complex induced by ligands required for protein translocation.</title>
        <authorList>
            <person name="Hanein D."/>
            <person name="Matlack K.E."/>
            <person name="Jungnickel B."/>
            <person name="Plath K."/>
            <person name="Kalies K.-U."/>
            <person name="Miller K.R."/>
            <person name="Rapoport T.A."/>
            <person name="Akey C.W."/>
        </authorList>
    </citation>
    <scope>ELECTRON MICROSCOPY OF THE SEC61 COMPLEX</scope>
</reference>
<reference key="6">
    <citation type="journal article" date="1997" name="Cell">
        <title>The aqueous pore through the translocon has a diameter of 40-60 A during cotranslational protein translocation at the ER membrane.</title>
        <authorList>
            <person name="Hamman B.D."/>
            <person name="Chen J.C."/>
            <person name="Johnson E.E."/>
            <person name="Johnson A.E."/>
        </authorList>
    </citation>
    <scope>TRANSLOCON COMPLEX PORE</scope>
</reference>
<reference key="7">
    <citation type="journal article" date="1999" name="Annu. Rev. Cell Dev. Biol.">
        <title>The translocon: a dynamic gateway at the ER membrane.</title>
        <authorList>
            <person name="Johnson A.E."/>
            <person name="van Waes M.A."/>
        </authorList>
    </citation>
    <scope>REVIEW ON THE TRANSLOCON COMPLEX</scope>
</reference>
<reference key="8">
    <citation type="journal article" date="2000" name="EMBO J.">
        <title>Evolutionarily conserved binding of ribosomes to the translocation channel via the large ribosomal RNA.</title>
        <authorList>
            <person name="Prinz A."/>
            <person name="Behrens C."/>
            <person name="Rapoport T.A."/>
            <person name="Hartmann E."/>
            <person name="Kalies K.-U."/>
        </authorList>
    </citation>
    <scope>ASSOCIATION OF THE SEC61 COMPLEX WITH RIBOSOMES</scope>
</reference>
<reference key="9">
    <citation type="journal article" date="2003" name="Nature">
        <title>Global analysis of protein expression in yeast.</title>
        <authorList>
            <person name="Ghaemmaghami S."/>
            <person name="Huh W.-K."/>
            <person name="Bower K."/>
            <person name="Howson R.W."/>
            <person name="Belle A."/>
            <person name="Dephoure N."/>
            <person name="O'Shea E.K."/>
            <person name="Weissman J.S."/>
        </authorList>
    </citation>
    <scope>LEVEL OF PROTEIN EXPRESSION [LARGE SCALE ANALYSIS]</scope>
</reference>
<reference key="10">
    <citation type="journal article" date="2004" name="Mol. Biol. Cell">
        <title>Interactions between Sec complex and prepro-alpha-factor during posttranslational protein transport into the endoplasmic reticulum.</title>
        <authorList>
            <person name="Plath K."/>
            <person name="Wilkinson B.M."/>
            <person name="Stirling C.J."/>
            <person name="Rapoport T.A."/>
        </authorList>
    </citation>
    <scope>ASSOCIATION WITH THE SIGNAL SEQUENCE</scope>
</reference>
<reference key="11">
    <citation type="journal article" date="2005" name="J. Biol. Chem.">
        <title>Subunits of the translocon interact with components of the oligosaccharyl transferase complex.</title>
        <authorList>
            <person name="Chavan M."/>
            <person name="Yan A."/>
            <person name="Lennarz W.J."/>
        </authorList>
    </citation>
    <scope>INTERACTION WITH STT3; OST1; OST2; OST4; SWP1 AND WBP1</scope>
</reference>
<reference key="12">
    <citation type="journal article" date="2005" name="J. Cell Biol.">
        <title>Identification of cytoplasmic residues of Sec61p involved in ribosome binding and cotranslational translocation.</title>
        <authorList>
            <person name="Cheng Z."/>
            <person name="Jiang Y."/>
            <person name="Mandon E.C."/>
            <person name="Gilmore R."/>
        </authorList>
    </citation>
    <scope>ASSOCIATION WITH THE RIBOSOME</scope>
    <scope>MUTAGENESIS OF LYS-273; ARG-275; GLY-276; LYS-405 AND ARG-406</scope>
</reference>
<reference key="13">
    <citation type="journal article" date="2006" name="Proc. Natl. Acad. Sci. U.S.A.">
        <title>A global topology map of the Saccharomyces cerevisiae membrane proteome.</title>
        <authorList>
            <person name="Kim H."/>
            <person name="Melen K."/>
            <person name="Oesterberg M."/>
            <person name="von Heijne G."/>
        </authorList>
    </citation>
    <scope>TOPOLOGY [LARGE SCALE ANALYSIS]</scope>
    <source>
        <strain>ATCC 208353 / W303-1A</strain>
    </source>
</reference>
<proteinExistence type="evidence at protein level"/>
<name>SC61A_YEAST</name>
<sequence>MSSNRVLDLFKPFESFLPEVIAPERKVPYNQKLIWTGVSLLIFLILGQIPLYGIVSSETSDPLYWLRAMLASNRGTLLELGVSPIITSSMIFQFLQGTQLLQIRPESKQDRELFQIAQKVCAIILILGQALVVVMTGNYGAPSDLGLPICLLLIFQLMFASLIVMLLDELLSKGYGLGSGISLFTATNIAEQIFWRAFAPTTVNSGRGKEFEGAVIAFFHLLAVRKDKKRALVEAFYRTNLPNMFQVLMTVAIFLFVLYLQGFRYELPIRSTKVRGQIGIYPIKLFYTSNTPIMLQSALTSNIFLISQILFQKYPTNPLIRLIGVWGIRPGTQGPQMALSGLAYYIQPLMSLSEALLDPIKTIVYITFVLGSCAVFSKTWIEISGTSPRDIAKQFKDQGMVINGKRETSIYRELKKIIPTAAAFGGATIGALSVGSDLLGTLGSGASILMATTTIYGYYEAAAKEGGFTKNLVPGFSDLM</sequence>
<protein>
    <recommendedName>
        <fullName>Protein transport protein SEC61</fullName>
    </recommendedName>
    <alternativeName>
        <fullName>Sec61 complex subunit SEC61</fullName>
    </alternativeName>
    <alternativeName>
        <fullName>Sec61 complex subunit alpha</fullName>
    </alternativeName>
</protein>
<organism>
    <name type="scientific">Saccharomyces cerevisiae (strain ATCC 204508 / S288c)</name>
    <name type="common">Baker's yeast</name>
    <dbReference type="NCBI Taxonomy" id="559292"/>
    <lineage>
        <taxon>Eukaryota</taxon>
        <taxon>Fungi</taxon>
        <taxon>Dikarya</taxon>
        <taxon>Ascomycota</taxon>
        <taxon>Saccharomycotina</taxon>
        <taxon>Saccharomycetes</taxon>
        <taxon>Saccharomycetales</taxon>
        <taxon>Saccharomycetaceae</taxon>
        <taxon>Saccharomyces</taxon>
    </lineage>
</organism>
<feature type="chain" id="PRO_0000131789" description="Protein transport protein SEC61">
    <location>
        <begin position="1"/>
        <end position="480"/>
    </location>
</feature>
<feature type="topological domain" description="Cytoplasmic" evidence="4">
    <location>
        <begin position="1"/>
        <end position="32"/>
    </location>
</feature>
<feature type="transmembrane region" description="Helical; Name=1" evidence="4">
    <location>
        <begin position="33"/>
        <end position="55"/>
    </location>
</feature>
<feature type="topological domain" description="Lumenal" evidence="4">
    <location>
        <begin position="56"/>
        <end position="75"/>
    </location>
</feature>
<feature type="transmembrane region" description="Helical; Name=2" evidence="4">
    <location>
        <begin position="76"/>
        <end position="95"/>
    </location>
</feature>
<feature type="topological domain" description="Cytoplasmic" evidence="4">
    <location>
        <begin position="96"/>
        <end position="119"/>
    </location>
</feature>
<feature type="transmembrane region" description="Helical; Name=3" evidence="4">
    <location>
        <begin position="120"/>
        <end position="141"/>
    </location>
</feature>
<feature type="topological domain" description="Lumenal" evidence="4">
    <location>
        <begin position="142"/>
        <end position="146"/>
    </location>
</feature>
<feature type="transmembrane region" description="Helical; Name=4" evidence="4">
    <location>
        <begin position="147"/>
        <end position="167"/>
    </location>
</feature>
<feature type="topological domain" description="Cytoplasmic" evidence="4">
    <location>
        <begin position="168"/>
        <end position="212"/>
    </location>
</feature>
<feature type="transmembrane region" description="Helical; Name=5" evidence="4">
    <location>
        <begin position="213"/>
        <end position="224"/>
    </location>
</feature>
<feature type="topological domain" description="Lumenal" evidence="4">
    <location>
        <begin position="225"/>
        <end position="240"/>
    </location>
</feature>
<feature type="transmembrane region" description="Helical; Name=6" evidence="4">
    <location>
        <begin position="241"/>
        <end position="260"/>
    </location>
</feature>
<feature type="topological domain" description="Cytoplasmic" evidence="4">
    <location>
        <begin position="261"/>
        <end position="290"/>
    </location>
</feature>
<feature type="transmembrane region" description="Helical; Name=7" evidence="4">
    <location>
        <begin position="291"/>
        <end position="311"/>
    </location>
</feature>
<feature type="topological domain" description="Lumenal" evidence="4">
    <location>
        <begin position="312"/>
        <end position="361"/>
    </location>
</feature>
<feature type="transmembrane region" description="Helical; Name=8" evidence="4">
    <location>
        <begin position="362"/>
        <end position="381"/>
    </location>
</feature>
<feature type="topological domain" description="Cytoplasmic" evidence="4">
    <location>
        <begin position="382"/>
        <end position="416"/>
    </location>
</feature>
<feature type="transmembrane region" description="Helical; Name=9" evidence="4">
    <location>
        <begin position="417"/>
        <end position="434"/>
    </location>
</feature>
<feature type="topological domain" description="Lumenal" evidence="4">
    <location>
        <begin position="435"/>
        <end position="437"/>
    </location>
</feature>
<feature type="transmembrane region" description="Helical; Name=10" evidence="4">
    <location>
        <begin position="438"/>
        <end position="459"/>
    </location>
</feature>
<feature type="topological domain" description="Cytoplasmic" evidence="4">
    <location>
        <begin position="460"/>
        <end position="480"/>
    </location>
</feature>
<feature type="mutagenesis site" description="Severe growth defect." evidence="2">
    <original>K</original>
    <variation>P</variation>
    <variation>G</variation>
    <location>
        <position position="273"/>
    </location>
</feature>
<feature type="mutagenesis site" description="Severe growth defect." evidence="2">
    <original>R</original>
    <variation>D</variation>
    <variation>G</variation>
    <variation>P</variation>
    <variation>Q</variation>
    <variation>Y</variation>
    <location>
        <position position="275"/>
    </location>
</feature>
<feature type="mutagenesis site" description="Severe growth defect; lowers SRP-dependent and SRP-independent translocation." evidence="2">
    <original>R</original>
    <variation>E</variation>
    <variation>F</variation>
    <variation>V</variation>
    <location>
        <position position="275"/>
    </location>
</feature>
<feature type="mutagenesis site" description="Severe growth defect." evidence="2">
    <original>G</original>
    <variation>P</variation>
    <location>
        <position position="276"/>
    </location>
</feature>
<feature type="mutagenesis site" description="Severe growth defect." evidence="2">
    <original>K</original>
    <variation>D</variation>
    <variation>E</variation>
    <variation>P</variation>
    <location>
        <position position="405"/>
    </location>
</feature>
<feature type="mutagenesis site" description="Severe growth defect; lowers SRP-dependent translocation." evidence="2">
    <original>R</original>
    <variation>D</variation>
    <location>
        <position position="406"/>
    </location>
</feature>
<feature type="mutagenesis site" description="Severe growth defect; lowers SRP-dependent and SRP-independent translocation." evidence="2">
    <original>R</original>
    <variation>E</variation>
    <location>
        <position position="406"/>
    </location>
</feature>
<feature type="mutagenesis site" description="Severe growth defect." evidence="2">
    <original>R</original>
    <variation>H</variation>
    <variation>W</variation>
    <location>
        <position position="406"/>
    </location>
</feature>
<feature type="helix" evidence="5">
    <location>
        <begin position="29"/>
        <end position="46"/>
    </location>
</feature>
<feature type="helix" evidence="5">
    <location>
        <begin position="64"/>
        <end position="69"/>
    </location>
</feature>
<feature type="helix" evidence="5">
    <location>
        <begin position="83"/>
        <end position="97"/>
    </location>
</feature>
<feature type="helix" evidence="5">
    <location>
        <begin position="109"/>
        <end position="136"/>
    </location>
</feature>
<feature type="helix" evidence="5">
    <location>
        <begin position="148"/>
        <end position="173"/>
    </location>
</feature>
<feature type="strand" evidence="5">
    <location>
        <begin position="176"/>
        <end position="178"/>
    </location>
</feature>
<feature type="helix" evidence="5">
    <location>
        <begin position="181"/>
        <end position="195"/>
    </location>
</feature>
<feature type="strand" evidence="5">
    <location>
        <begin position="202"/>
        <end position="207"/>
    </location>
</feature>
<feature type="strand" evidence="5">
    <location>
        <begin position="209"/>
        <end position="213"/>
    </location>
</feature>
<feature type="helix" evidence="5">
    <location>
        <begin position="214"/>
        <end position="224"/>
    </location>
</feature>
<feature type="helix" evidence="5">
    <location>
        <begin position="228"/>
        <end position="237"/>
    </location>
</feature>
<feature type="strand" evidence="5">
    <location>
        <begin position="239"/>
        <end position="241"/>
    </location>
</feature>
<feature type="helix" evidence="5">
    <location>
        <begin position="244"/>
        <end position="259"/>
    </location>
</feature>
<feature type="strand" evidence="5">
    <location>
        <begin position="264"/>
        <end position="276"/>
    </location>
</feature>
<feature type="strand" evidence="5">
    <location>
        <begin position="278"/>
        <end position="286"/>
    </location>
</feature>
<feature type="turn" evidence="5">
    <location>
        <begin position="287"/>
        <end position="289"/>
    </location>
</feature>
<feature type="helix" evidence="5">
    <location>
        <begin position="290"/>
        <end position="313"/>
    </location>
</feature>
<feature type="helix" evidence="5">
    <location>
        <begin position="318"/>
        <end position="323"/>
    </location>
</feature>
<feature type="strand" evidence="6">
    <location>
        <begin position="325"/>
        <end position="327"/>
    </location>
</feature>
<feature type="strand" evidence="6">
    <location>
        <begin position="337"/>
        <end position="341"/>
    </location>
</feature>
<feature type="helix" evidence="5">
    <location>
        <begin position="342"/>
        <end position="346"/>
    </location>
</feature>
<feature type="helix" evidence="5">
    <location>
        <begin position="352"/>
        <end position="357"/>
    </location>
</feature>
<feature type="helix" evidence="5">
    <location>
        <begin position="359"/>
        <end position="383"/>
    </location>
</feature>
<feature type="helix" evidence="5">
    <location>
        <begin position="388"/>
        <end position="398"/>
    </location>
</feature>
<feature type="strand" evidence="5">
    <location>
        <begin position="400"/>
        <end position="402"/>
    </location>
</feature>
<feature type="helix" evidence="5">
    <location>
        <begin position="410"/>
        <end position="414"/>
    </location>
</feature>
<feature type="turn" evidence="5">
    <location>
        <begin position="415"/>
        <end position="417"/>
    </location>
</feature>
<feature type="helix" evidence="5">
    <location>
        <begin position="418"/>
        <end position="439"/>
    </location>
</feature>
<feature type="helix" evidence="5">
    <location>
        <begin position="445"/>
        <end position="465"/>
    </location>
</feature>
<evidence type="ECO:0000269" key="1">
    <source>
    </source>
</evidence>
<evidence type="ECO:0000269" key="2">
    <source>
    </source>
</evidence>
<evidence type="ECO:0000269" key="3">
    <source>
    </source>
</evidence>
<evidence type="ECO:0000305" key="4"/>
<evidence type="ECO:0007829" key="5">
    <source>
        <dbReference type="PDB" id="7KAH"/>
    </source>
</evidence>
<evidence type="ECO:0007829" key="6">
    <source>
        <dbReference type="PDB" id="7KAJ"/>
    </source>
</evidence>
<comment type="function">
    <text>Part of the Sec61 complex, which is the major component of a channel-forming translocon complex that mediates protein translocation across the endoplasmic reticulum (ER). The functional states of the translocon complex include co- and post-translational ER import, cotranslational membrane protein integration and retrograde transport of misfolded proteins out of the ER. In the cotranslational pathway, ribosomes synthesizing presecretory proteins are targeted to the translocon by the cytosolic signal recognition particle (SRP) and its ER-localized receptor. The association of the Sec61 complex with the ribosome is mediated by the 28S rRNA of the large ribosomal subunit. SRP-independent post-translational translocation requires the association of additional factors, such as the Sec62/63 complex and KAR2. In an initial step, the signal sequence seems to bind simultaneously to SEC61 and SEC62. A cycle of assembly and disassembly of Sec62/63 complex from SEC61 may govern the activity of the translocon. SEC61 mediates the association with the ribosome.</text>
</comment>
<comment type="subunit">
    <text evidence="3">Component of the heterotrimeric Sec61 complex, which is composed of SEC61, SBH1 and SSS1. Presumably three to four Sec61 heterotrimers assemble into an oligomeric ring with a central aqueous pore. In cotranslational ER import, the pore diameter varies from 9-15 A in a ribosome-free resting state to 40-60 A in a functional state when associated with the ribosome. The Sec61 complex is part of a channel-forming translocon complex whose composition seem to change dependent upon different functional states. During post-translational ER import the Sec61 complex associates with the Sec62/63 complex to form the Sec complex. SEC61 interacts with STT3, OST1, OST2, OST4, SWP1 and WBP1 components of the OT complex.</text>
</comment>
<comment type="interaction">
    <interactant intactId="EBI-16400">
        <id>P32915</id>
    </interactant>
    <interactant intactId="EBI-31647">
        <id>Q05787</id>
        <label>HRD3</label>
    </interactant>
    <organismsDiffer>false</organismsDiffer>
    <experiments>2</experiments>
</comment>
<comment type="interaction">
    <interactant intactId="EBI-16400">
        <id>P32915</id>
    </interactant>
    <interactant intactId="EBI-12673">
        <id>P46964</id>
        <label>OST2</label>
    </interactant>
    <organismsDiffer>false</organismsDiffer>
    <experiments>2</experiments>
</comment>
<comment type="interaction">
    <interactant intactId="EBI-16400">
        <id>P32915</id>
    </interactant>
    <interactant intactId="EBI-12689">
        <id>Q99380</id>
        <label>OST4</label>
    </interactant>
    <organismsDiffer>false</organismsDiffer>
    <experiments>2</experiments>
</comment>
<comment type="interaction">
    <interactant intactId="EBI-16400">
        <id>P32915</id>
    </interactant>
    <interactant intactId="EBI-4153">
        <id>P00729</id>
        <label>PRC1</label>
    </interactant>
    <organismsDiffer>false</organismsDiffer>
    <experiments>4</experiments>
</comment>
<comment type="interaction">
    <interactant intactId="EBI-16400">
        <id>P32915</id>
    </interactant>
    <interactant intactId="EBI-16632">
        <id>P21825</id>
        <label>SEC62</label>
    </interactant>
    <organismsDiffer>false</organismsDiffer>
    <experiments>12</experiments>
</comment>
<comment type="interaction">
    <interactant intactId="EBI-16400">
        <id>P32915</id>
    </interactant>
    <interactant intactId="EBI-16647">
        <id>P33754</id>
        <label>SEC66</label>
    </interactant>
    <organismsDiffer>false</organismsDiffer>
    <experiments>12</experiments>
</comment>
<comment type="interaction">
    <interactant intactId="EBI-16400">
        <id>P32915</id>
    </interactant>
    <interactant intactId="EBI-16406">
        <id>P35179</id>
        <label>SSS1</label>
    </interactant>
    <organismsDiffer>false</organismsDiffer>
    <experiments>17</experiments>
</comment>
<comment type="interaction">
    <interactant intactId="EBI-16400">
        <id>P32915</id>
    </interactant>
    <interactant intactId="EBI-18447">
        <id>P39007</id>
        <label>STT3</label>
    </interactant>
    <organismsDiffer>false</organismsDiffer>
    <experiments>2</experiments>
</comment>
<comment type="interaction">
    <interactant intactId="EBI-16400">
        <id>P32915</id>
    </interactant>
    <interactant intactId="EBI-12666">
        <id>Q02795</id>
        <label>SWP1</label>
    </interactant>
    <organismsDiffer>false</organismsDiffer>
    <experiments>3</experiments>
</comment>
<comment type="interaction">
    <interactant intactId="EBI-16400">
        <id>P32915</id>
    </interactant>
    <interactant intactId="EBI-12658">
        <id>P33767</id>
        <label>WBP1</label>
    </interactant>
    <organismsDiffer>false</organismsDiffer>
    <experiments>3</experiments>
</comment>
<comment type="subcellular location">
    <subcellularLocation>
        <location>Endoplasmic reticulum membrane</location>
        <topology>Multi-pass membrane protein</topology>
    </subcellularLocation>
</comment>
<comment type="miscellaneous">
    <text evidence="1">Present with 24800 molecules/cell in log phase SD medium.</text>
</comment>
<comment type="similarity">
    <text evidence="4">Belongs to the SecY/SEC61-alpha family.</text>
</comment>
<dbReference type="EMBL" id="X62340">
    <property type="protein sequence ID" value="CAA44215.1"/>
    <property type="molecule type" value="Genomic_DNA"/>
</dbReference>
<dbReference type="EMBL" id="U19104">
    <property type="protein sequence ID" value="AAB67276.1"/>
    <property type="molecule type" value="Genomic_DNA"/>
</dbReference>
<dbReference type="EMBL" id="U19103">
    <property type="protein sequence ID" value="AAB67581.1"/>
    <property type="molecule type" value="Genomic_DNA"/>
</dbReference>
<dbReference type="EMBL" id="BK006945">
    <property type="protein sequence ID" value="DAA09680.1"/>
    <property type="molecule type" value="Genomic_DNA"/>
</dbReference>
<dbReference type="PIR" id="A60043">
    <property type="entry name" value="A60043"/>
</dbReference>
<dbReference type="RefSeq" id="NP_013482.1">
    <property type="nucleotide sequence ID" value="NM_001182267.1"/>
</dbReference>
<dbReference type="PDB" id="6N3Q">
    <property type="method" value="EM"/>
    <property type="resolution" value="3.68 A"/>
    <property type="chains" value="A=1-480"/>
</dbReference>
<dbReference type="PDB" id="6ND1">
    <property type="method" value="EM"/>
    <property type="resolution" value="4.10 A"/>
    <property type="chains" value="B=1-480"/>
</dbReference>
<dbReference type="PDB" id="7AFT">
    <property type="method" value="EM"/>
    <property type="resolution" value="4.40 A"/>
    <property type="chains" value="A=1-480"/>
</dbReference>
<dbReference type="PDB" id="7KAH">
    <property type="method" value="EM"/>
    <property type="resolution" value="3.10 A"/>
    <property type="chains" value="A=1-480"/>
</dbReference>
<dbReference type="PDB" id="7KAI">
    <property type="method" value="EM"/>
    <property type="resolution" value="3.20 A"/>
    <property type="chains" value="A=1-480"/>
</dbReference>
<dbReference type="PDB" id="7KAJ">
    <property type="method" value="EM"/>
    <property type="resolution" value="3.10 A"/>
    <property type="chains" value="A=1-480"/>
</dbReference>
<dbReference type="PDB" id="7KAO">
    <property type="method" value="EM"/>
    <property type="resolution" value="4.00 A"/>
    <property type="chains" value="A=1-480"/>
</dbReference>
<dbReference type="PDB" id="7KAP">
    <property type="method" value="EM"/>
    <property type="resolution" value="4.10 A"/>
    <property type="chains" value="A=1-480"/>
</dbReference>
<dbReference type="PDB" id="7KAQ">
    <property type="method" value="EM"/>
    <property type="resolution" value="4.00 A"/>
    <property type="chains" value="A=1-480"/>
</dbReference>
<dbReference type="PDB" id="7KAR">
    <property type="method" value="EM"/>
    <property type="resolution" value="4.00 A"/>
    <property type="chains" value="A=1-480"/>
</dbReference>
<dbReference type="PDB" id="7KAS">
    <property type="method" value="EM"/>
    <property type="resolution" value="3.90 A"/>
    <property type="chains" value="A/G=1-480"/>
</dbReference>
<dbReference type="PDB" id="7KAT">
    <property type="method" value="EM"/>
    <property type="resolution" value="4.40 A"/>
    <property type="chains" value="A=1-480"/>
</dbReference>
<dbReference type="PDB" id="7KAU">
    <property type="method" value="EM"/>
    <property type="resolution" value="4.00 A"/>
    <property type="chains" value="A=1-480"/>
</dbReference>
<dbReference type="PDB" id="7KB5">
    <property type="method" value="EM"/>
    <property type="resolution" value="3.80 A"/>
    <property type="chains" value="A=1-480"/>
</dbReference>
<dbReference type="PDBsum" id="6N3Q"/>
<dbReference type="PDBsum" id="6ND1"/>
<dbReference type="PDBsum" id="7AFT"/>
<dbReference type="PDBsum" id="7KAH"/>
<dbReference type="PDBsum" id="7KAI"/>
<dbReference type="PDBsum" id="7KAJ"/>
<dbReference type="PDBsum" id="7KAO"/>
<dbReference type="PDBsum" id="7KAP"/>
<dbReference type="PDBsum" id="7KAQ"/>
<dbReference type="PDBsum" id="7KAR"/>
<dbReference type="PDBsum" id="7KAS"/>
<dbReference type="PDBsum" id="7KAT"/>
<dbReference type="PDBsum" id="7KAU"/>
<dbReference type="PDBsum" id="7KB5"/>
<dbReference type="EMDB" id="EMD-0336"/>
<dbReference type="EMDB" id="EMD-0440"/>
<dbReference type="EMDB" id="EMD-11774"/>
<dbReference type="EMDB" id="EMD-22770"/>
<dbReference type="EMDB" id="EMD-22771"/>
<dbReference type="EMDB" id="EMD-22772"/>
<dbReference type="EMDB" id="EMD-22778"/>
<dbReference type="EMDB" id="EMD-22779"/>
<dbReference type="EMDB" id="EMD-22780"/>
<dbReference type="EMDB" id="EMD-22781"/>
<dbReference type="EMDB" id="EMD-22782"/>
<dbReference type="EMDB" id="EMD-22783"/>
<dbReference type="EMDB" id="EMD-22784"/>
<dbReference type="EMDB" id="EMD-22787"/>
<dbReference type="SMR" id="P32915"/>
<dbReference type="BioGRID" id="31638">
    <property type="interactions" value="2482"/>
</dbReference>
<dbReference type="ComplexPortal" id="CPX-1833">
    <property type="entry name" value="SEC61 protein-conducting channel complex"/>
</dbReference>
<dbReference type="ComplexPortal" id="CPX-3055">
    <property type="entry name" value="Translocon complex"/>
</dbReference>
<dbReference type="DIP" id="DIP-2433N"/>
<dbReference type="FunCoup" id="P32915">
    <property type="interactions" value="1217"/>
</dbReference>
<dbReference type="IntAct" id="P32915">
    <property type="interactions" value="27"/>
</dbReference>
<dbReference type="MINT" id="P32915"/>
<dbReference type="STRING" id="4932.YLR378C"/>
<dbReference type="TCDB" id="3.A.5.8.1">
    <property type="family name" value="the general secretory pathway (sec) family"/>
</dbReference>
<dbReference type="iPTMnet" id="P32915"/>
<dbReference type="PaxDb" id="4932-YLR378C"/>
<dbReference type="PeptideAtlas" id="P32915"/>
<dbReference type="TopDownProteomics" id="P32915"/>
<dbReference type="EnsemblFungi" id="YLR378C_mRNA">
    <property type="protein sequence ID" value="YLR378C"/>
    <property type="gene ID" value="YLR378C"/>
</dbReference>
<dbReference type="GeneID" id="851095"/>
<dbReference type="KEGG" id="sce:YLR378C"/>
<dbReference type="AGR" id="SGD:S000004370"/>
<dbReference type="SGD" id="S000004370">
    <property type="gene designation" value="SEC61"/>
</dbReference>
<dbReference type="VEuPathDB" id="FungiDB:YLR378C"/>
<dbReference type="eggNOG" id="KOG1373">
    <property type="taxonomic scope" value="Eukaryota"/>
</dbReference>
<dbReference type="GeneTree" id="ENSGT00390000003721"/>
<dbReference type="HOGENOM" id="CLU_031763_2_1_1"/>
<dbReference type="InParanoid" id="P32915"/>
<dbReference type="OMA" id="PMMRQMF"/>
<dbReference type="OrthoDB" id="420669at2759"/>
<dbReference type="BioCyc" id="YEAST:G3O-32445-MONOMER"/>
<dbReference type="BioGRID-ORCS" id="851095">
    <property type="hits" value="5 hits in 10 CRISPR screens"/>
</dbReference>
<dbReference type="PRO" id="PR:P32915"/>
<dbReference type="Proteomes" id="UP000002311">
    <property type="component" value="Chromosome XII"/>
</dbReference>
<dbReference type="RNAct" id="P32915">
    <property type="molecule type" value="protein"/>
</dbReference>
<dbReference type="GO" id="GO:0005783">
    <property type="term" value="C:endoplasmic reticulum"/>
    <property type="evidence" value="ECO:0007005"/>
    <property type="project" value="SGD"/>
</dbReference>
<dbReference type="GO" id="GO:0030867">
    <property type="term" value="C:rough endoplasmic reticulum membrane"/>
    <property type="evidence" value="ECO:0000303"/>
    <property type="project" value="ComplexPortal"/>
</dbReference>
<dbReference type="GO" id="GO:0005784">
    <property type="term" value="C:Sec61 translocon complex"/>
    <property type="evidence" value="ECO:0000314"/>
    <property type="project" value="SGD"/>
</dbReference>
<dbReference type="GO" id="GO:0071256">
    <property type="term" value="C:translocon complex"/>
    <property type="evidence" value="ECO:0000353"/>
    <property type="project" value="ComplexPortal"/>
</dbReference>
<dbReference type="GO" id="GO:1904680">
    <property type="term" value="F:peptide transmembrane transporter activity"/>
    <property type="evidence" value="ECO:0000315"/>
    <property type="project" value="SGD"/>
</dbReference>
<dbReference type="GO" id="GO:0008320">
    <property type="term" value="F:protein transmembrane transporter activity"/>
    <property type="evidence" value="ECO:0000314"/>
    <property type="project" value="SGD"/>
</dbReference>
<dbReference type="GO" id="GO:0015450">
    <property type="term" value="F:protein-transporting ATPase activity"/>
    <property type="evidence" value="ECO:0000314"/>
    <property type="project" value="SGD"/>
</dbReference>
<dbReference type="GO" id="GO:0043022">
    <property type="term" value="F:ribosome binding"/>
    <property type="evidence" value="ECO:0000318"/>
    <property type="project" value="GO_Central"/>
</dbReference>
<dbReference type="GO" id="GO:0005048">
    <property type="term" value="F:signal sequence binding"/>
    <property type="evidence" value="ECO:0000314"/>
    <property type="project" value="SGD"/>
</dbReference>
<dbReference type="GO" id="GO:0036503">
    <property type="term" value="P:ERAD pathway"/>
    <property type="evidence" value="ECO:0000315"/>
    <property type="project" value="SGD"/>
</dbReference>
<dbReference type="GO" id="GO:0070843">
    <property type="term" value="P:misfolded protein transport"/>
    <property type="evidence" value="ECO:0000315"/>
    <property type="project" value="SGD"/>
</dbReference>
<dbReference type="GO" id="GO:0031204">
    <property type="term" value="P:post-translational protein targeting to membrane, translocation"/>
    <property type="evidence" value="ECO:0000314"/>
    <property type="project" value="SGD"/>
</dbReference>
<dbReference type="GO" id="GO:0030970">
    <property type="term" value="P:retrograde protein transport, ER to cytosol"/>
    <property type="evidence" value="ECO:0000315"/>
    <property type="project" value="SGD"/>
</dbReference>
<dbReference type="GO" id="GO:0006616">
    <property type="term" value="P:SRP-dependent cotranslational protein targeting to membrane, translocation"/>
    <property type="evidence" value="ECO:0000314"/>
    <property type="project" value="SGD"/>
</dbReference>
<dbReference type="FunFam" id="1.10.3370.10:FF:000002">
    <property type="entry name" value="Transport Sec61 subunit alpha isoform 2"/>
    <property type="match status" value="1"/>
</dbReference>
<dbReference type="Gene3D" id="1.10.3370.10">
    <property type="entry name" value="SecY subunit domain"/>
    <property type="match status" value="1"/>
</dbReference>
<dbReference type="InterPro" id="IPR002208">
    <property type="entry name" value="SecY/SEC61-alpha"/>
</dbReference>
<dbReference type="InterPro" id="IPR030659">
    <property type="entry name" value="SecY_CS"/>
</dbReference>
<dbReference type="InterPro" id="IPR023201">
    <property type="entry name" value="SecY_dom_sf"/>
</dbReference>
<dbReference type="InterPro" id="IPR019561">
    <property type="entry name" value="Translocon_Sec61/SecY_plug_dom"/>
</dbReference>
<dbReference type="NCBIfam" id="TIGR00967">
    <property type="entry name" value="3a0501s007"/>
    <property type="match status" value="1"/>
</dbReference>
<dbReference type="NCBIfam" id="NF006341">
    <property type="entry name" value="PRK08568.1-5"/>
    <property type="match status" value="1"/>
</dbReference>
<dbReference type="PANTHER" id="PTHR10906">
    <property type="entry name" value="SECY/SEC61-ALPHA FAMILY MEMBER"/>
    <property type="match status" value="1"/>
</dbReference>
<dbReference type="Pfam" id="PF10559">
    <property type="entry name" value="Plug_translocon"/>
    <property type="match status" value="1"/>
</dbReference>
<dbReference type="Pfam" id="PF00344">
    <property type="entry name" value="SecY"/>
    <property type="match status" value="1"/>
</dbReference>
<dbReference type="PIRSF" id="PIRSF004557">
    <property type="entry name" value="SecY"/>
    <property type="match status" value="1"/>
</dbReference>
<dbReference type="SUPFAM" id="SSF103491">
    <property type="entry name" value="Preprotein translocase SecY subunit"/>
    <property type="match status" value="1"/>
</dbReference>
<dbReference type="PROSITE" id="PS00755">
    <property type="entry name" value="SECY_1"/>
    <property type="match status" value="1"/>
</dbReference>
<dbReference type="PROSITE" id="PS00756">
    <property type="entry name" value="SECY_2"/>
    <property type="match status" value="1"/>
</dbReference>